<comment type="function">
    <text evidence="2 4 6 7 8 9 10 12 13">Intracellular channel initially characterized as a non-selective Ca(2+)-permeable channel activated by NAADP (nicotinic acid adenine dinucleotide phosphate), it is also a highly-selective Na(+) channel activated directly by PI(3,5)P2 (phosphatidylinositol 3,5-bisphosphate) (PubMed:19387438, PubMed:20495006, PubMed:20547763, PubMed:25144390, PubMed:27231233). Localizes to the lysosomal and late endosome membranes where it regulates organellar membrane excitability, membrane trafficking, and pH homeostasis. Is associated with a plethora of physiological processes, including mTOR-dependent nutrient sensing, skin pigmentation and autophagy (PubMed:23063126, PubMed:23394946, PubMed:25144390). Ion selectivity is not fixed but rather agonist-dependent and under defined ionic conditions, can be readily activated by both NAADP and PI(3,5)P2. As calcium channel, it increases the pH in the lysosomal lumen, as sodium channel, it promotes lysosomal exocytosis (PubMed:32167471). Plays a crucial role in endolysosomal trafficking in the endolysosomal degradation pathway and is potentially involved in the homeostatic control of many macromolecules and cell metabolites (PubMed:19387438, PubMed:20495006, PubMed:20547763, PubMed:23063126, PubMed:23394946, PubMed:25144390, PubMed:32167471). Also expressed in melanosomes of pigmented cells where mediates a Ca(2+) channel and/or PI(3,5)P2-activated melanosomal Na(+) channel to acidify pH and inhibit tyrosinase activity required for melanogenesis and pigmentation (PubMed:27231233). Unlike the voltage-dependent TPCN1, TPCN2 is voltage independent and can be activated solely by PI(3,5)P2 binding. In contrast, PI(4,5)P2, PI(3,4)P2, PI(3)P and PI(5)P have no obvious effect on channel activation (By similarity).</text>
</comment>
<comment type="function">
    <text evidence="11">(Microbial infection) During Ebola virus (EBOV) infection, controls the movement of endosomes containing virus particles and is required by EBOV to escape from the endosomal network into the cell cytoplasm.</text>
</comment>
<comment type="catalytic activity">
    <reaction evidence="10">
        <text>Ca(2+)(in) = Ca(2+)(out)</text>
        <dbReference type="Rhea" id="RHEA:29671"/>
        <dbReference type="ChEBI" id="CHEBI:29108"/>
    </reaction>
    <physiologicalReaction direction="right-to-left" evidence="10">
        <dbReference type="Rhea" id="RHEA:29673"/>
    </physiologicalReaction>
</comment>
<comment type="catalytic activity">
    <reaction evidence="12">
        <text>Na(+)(in) = Na(+)(out)</text>
        <dbReference type="Rhea" id="RHEA:34963"/>
        <dbReference type="ChEBI" id="CHEBI:29101"/>
    </reaction>
    <physiologicalReaction direction="right-to-left" evidence="2">
        <dbReference type="Rhea" id="RHEA:34965"/>
    </physiologicalReaction>
</comment>
<comment type="activity regulation">
    <text evidence="2 9 11">Regulated by Mg(2+) ions, cytosolic Mg(2+) selectively inhibits outward current while lysosomal Mg(2+) modestly inhibits both the outward and inward currents. In the absence of Mg(2+), NAADP readily activates TPCN2, with properties similar to PI(3,5)P2 (By similarity). Na(+) current is inhibited by ATP in a MTORC-dependent manner. ATP sensitivity is independent of PI(3,5)P2 (PubMed:23394946). Both current elicited by PI(3,5)P2 as well as NAADP are inhibited by tetrandrine.</text>
</comment>
<comment type="subunit">
    <text evidence="2 16">Homodimer (Probable). Interacts with LRRK2. Interacts with HAX1. Interacts with MTOR; the interaction is required for TPCN2 ATP sensitivity (By similarity). Found in a complex with LSM12, TPCN1 and TPCN2 (By similarity). Interacts with LSM12 (By similarity).</text>
</comment>
<comment type="subcellular location">
    <subcellularLocation>
        <location evidence="17">Late endosome membrane</location>
        <topology evidence="3">Multi-pass membrane protein</topology>
    </subcellularLocation>
    <subcellularLocation>
        <location evidence="5 6 10 13">Lysosome membrane</location>
        <topology evidence="5 6">Multi-pass membrane protein</topology>
    </subcellularLocation>
    <subcellularLocation>
        <location evidence="12">Melanosome membrane</location>
        <topology evidence="3">Multi-pass membrane protein</topology>
    </subcellularLocation>
    <text>Only the acidic lysosomal fraction is sensitive to NAADP.</text>
</comment>
<comment type="alternative products">
    <event type="alternative splicing"/>
    <isoform>
        <id>Q8BWC0-1</id>
        <name>1</name>
        <sequence type="displayed"/>
    </isoform>
    <isoform>
        <id>Q8BWC0-2</id>
        <name>2</name>
        <sequence type="described" ref="VSP_023009 VSP_023010"/>
    </isoform>
    <isoform>
        <id>Q8BWC0-3</id>
        <name>3</name>
        <sequence type="described" ref="VSP_023008"/>
    </isoform>
</comment>
<comment type="tissue specificity">
    <text evidence="5 12 13">Widely expressed. Highly expressed in macrophages (PubMed:32167471). Expressed in pigmented cells (PubMed:27231233).</text>
</comment>
<comment type="domain">
    <text evidence="1">Each of the two internal repeats contains five hydrophobic transmembrane segments (S1, S2, S3, S5, S6) and one positively charged transmembrane segment (S4). S4 segments probably represent the voltage-sensor and are characterized by a series of positively charged amino acids at every third position (By similarity).</text>
</comment>
<comment type="PTM">
    <text evidence="5">N-glycosylated.</text>
</comment>
<comment type="disruption phenotype">
    <text evidence="4 9 10">Loss of NAADP-mediated calcium release (PubMed:19387438). Mutant mice are highly susceptible to hepatic cholesterol overload, have hyperlipoproteinaemia and liver damage consistent with non-alcoholic fatty liver hepatitis (PubMed:25144390). TPCN1 and TPCN2 double knockouts are viable, fertile, have no obvious morphological abnormalities, and no obvious behavioral defects. After fasting for 3 days, they are less active and endurance performance is reduced by 8.3 fold in contrast to wild-type littermates that show no changes. Two days after re-introduction of food, mutants regain endurance and become as active as before fasting (PubMed:23394946).</text>
</comment>
<comment type="similarity">
    <text evidence="15">Belongs to the calcium channel alpha-1 subunit (TC 1.A.1.11) family. Two pore calcium channel subfamily.</text>
</comment>
<comment type="sequence caution" evidence="15">
    <conflict type="frameshift">
        <sequence resource="EMBL-CDS" id="BAC41072"/>
    </conflict>
</comment>
<reference key="1">
    <citation type="journal article" date="2005" name="Science">
        <title>The transcriptional landscape of the mammalian genome.</title>
        <authorList>
            <person name="Carninci P."/>
            <person name="Kasukawa T."/>
            <person name="Katayama S."/>
            <person name="Gough J."/>
            <person name="Frith M.C."/>
            <person name="Maeda N."/>
            <person name="Oyama R."/>
            <person name="Ravasi T."/>
            <person name="Lenhard B."/>
            <person name="Wells C."/>
            <person name="Kodzius R."/>
            <person name="Shimokawa K."/>
            <person name="Bajic V.B."/>
            <person name="Brenner S.E."/>
            <person name="Batalov S."/>
            <person name="Forrest A.R."/>
            <person name="Zavolan M."/>
            <person name="Davis M.J."/>
            <person name="Wilming L.G."/>
            <person name="Aidinis V."/>
            <person name="Allen J.E."/>
            <person name="Ambesi-Impiombato A."/>
            <person name="Apweiler R."/>
            <person name="Aturaliya R.N."/>
            <person name="Bailey T.L."/>
            <person name="Bansal M."/>
            <person name="Baxter L."/>
            <person name="Beisel K.W."/>
            <person name="Bersano T."/>
            <person name="Bono H."/>
            <person name="Chalk A.M."/>
            <person name="Chiu K.P."/>
            <person name="Choudhary V."/>
            <person name="Christoffels A."/>
            <person name="Clutterbuck D.R."/>
            <person name="Crowe M.L."/>
            <person name="Dalla E."/>
            <person name="Dalrymple B.P."/>
            <person name="de Bono B."/>
            <person name="Della Gatta G."/>
            <person name="di Bernardo D."/>
            <person name="Down T."/>
            <person name="Engstrom P."/>
            <person name="Fagiolini M."/>
            <person name="Faulkner G."/>
            <person name="Fletcher C.F."/>
            <person name="Fukushima T."/>
            <person name="Furuno M."/>
            <person name="Futaki S."/>
            <person name="Gariboldi M."/>
            <person name="Georgii-Hemming P."/>
            <person name="Gingeras T.R."/>
            <person name="Gojobori T."/>
            <person name="Green R.E."/>
            <person name="Gustincich S."/>
            <person name="Harbers M."/>
            <person name="Hayashi Y."/>
            <person name="Hensch T.K."/>
            <person name="Hirokawa N."/>
            <person name="Hill D."/>
            <person name="Huminiecki L."/>
            <person name="Iacono M."/>
            <person name="Ikeo K."/>
            <person name="Iwama A."/>
            <person name="Ishikawa T."/>
            <person name="Jakt M."/>
            <person name="Kanapin A."/>
            <person name="Katoh M."/>
            <person name="Kawasawa Y."/>
            <person name="Kelso J."/>
            <person name="Kitamura H."/>
            <person name="Kitano H."/>
            <person name="Kollias G."/>
            <person name="Krishnan S.P."/>
            <person name="Kruger A."/>
            <person name="Kummerfeld S.K."/>
            <person name="Kurochkin I.V."/>
            <person name="Lareau L.F."/>
            <person name="Lazarevic D."/>
            <person name="Lipovich L."/>
            <person name="Liu J."/>
            <person name="Liuni S."/>
            <person name="McWilliam S."/>
            <person name="Madan Babu M."/>
            <person name="Madera M."/>
            <person name="Marchionni L."/>
            <person name="Matsuda H."/>
            <person name="Matsuzawa S."/>
            <person name="Miki H."/>
            <person name="Mignone F."/>
            <person name="Miyake S."/>
            <person name="Morris K."/>
            <person name="Mottagui-Tabar S."/>
            <person name="Mulder N."/>
            <person name="Nakano N."/>
            <person name="Nakauchi H."/>
            <person name="Ng P."/>
            <person name="Nilsson R."/>
            <person name="Nishiguchi S."/>
            <person name="Nishikawa S."/>
            <person name="Nori F."/>
            <person name="Ohara O."/>
            <person name="Okazaki Y."/>
            <person name="Orlando V."/>
            <person name="Pang K.C."/>
            <person name="Pavan W.J."/>
            <person name="Pavesi G."/>
            <person name="Pesole G."/>
            <person name="Petrovsky N."/>
            <person name="Piazza S."/>
            <person name="Reed J."/>
            <person name="Reid J.F."/>
            <person name="Ring B.Z."/>
            <person name="Ringwald M."/>
            <person name="Rost B."/>
            <person name="Ruan Y."/>
            <person name="Salzberg S.L."/>
            <person name="Sandelin A."/>
            <person name="Schneider C."/>
            <person name="Schoenbach C."/>
            <person name="Sekiguchi K."/>
            <person name="Semple C.A."/>
            <person name="Seno S."/>
            <person name="Sessa L."/>
            <person name="Sheng Y."/>
            <person name="Shibata Y."/>
            <person name="Shimada H."/>
            <person name="Shimada K."/>
            <person name="Silva D."/>
            <person name="Sinclair B."/>
            <person name="Sperling S."/>
            <person name="Stupka E."/>
            <person name="Sugiura K."/>
            <person name="Sultana R."/>
            <person name="Takenaka Y."/>
            <person name="Taki K."/>
            <person name="Tammoja K."/>
            <person name="Tan S.L."/>
            <person name="Tang S."/>
            <person name="Taylor M.S."/>
            <person name="Tegner J."/>
            <person name="Teichmann S.A."/>
            <person name="Ueda H.R."/>
            <person name="van Nimwegen E."/>
            <person name="Verardo R."/>
            <person name="Wei C.L."/>
            <person name="Yagi K."/>
            <person name="Yamanishi H."/>
            <person name="Zabarovsky E."/>
            <person name="Zhu S."/>
            <person name="Zimmer A."/>
            <person name="Hide W."/>
            <person name="Bult C."/>
            <person name="Grimmond S.M."/>
            <person name="Teasdale R.D."/>
            <person name="Liu E.T."/>
            <person name="Brusic V."/>
            <person name="Quackenbush J."/>
            <person name="Wahlestedt C."/>
            <person name="Mattick J.S."/>
            <person name="Hume D.A."/>
            <person name="Kai C."/>
            <person name="Sasaki D."/>
            <person name="Tomaru Y."/>
            <person name="Fukuda S."/>
            <person name="Kanamori-Katayama M."/>
            <person name="Suzuki M."/>
            <person name="Aoki J."/>
            <person name="Arakawa T."/>
            <person name="Iida J."/>
            <person name="Imamura K."/>
            <person name="Itoh M."/>
            <person name="Kato T."/>
            <person name="Kawaji H."/>
            <person name="Kawagashira N."/>
            <person name="Kawashima T."/>
            <person name="Kojima M."/>
            <person name="Kondo S."/>
            <person name="Konno H."/>
            <person name="Nakano K."/>
            <person name="Ninomiya N."/>
            <person name="Nishio T."/>
            <person name="Okada M."/>
            <person name="Plessy C."/>
            <person name="Shibata K."/>
            <person name="Shiraki T."/>
            <person name="Suzuki S."/>
            <person name="Tagami M."/>
            <person name="Waki K."/>
            <person name="Watahiki A."/>
            <person name="Okamura-Oho Y."/>
            <person name="Suzuki H."/>
            <person name="Kawai J."/>
            <person name="Hayashizaki Y."/>
        </authorList>
    </citation>
    <scope>NUCLEOTIDE SEQUENCE [LARGE SCALE MRNA] (ISOFORM 1)</scope>
    <source>
        <strain>C57BL/6J</strain>
        <tissue>Bone marrow</tissue>
        <tissue>Heart</tissue>
    </source>
</reference>
<reference key="2">
    <citation type="journal article" date="2004" name="Genome Res.">
        <title>The status, quality, and expansion of the NIH full-length cDNA project: the Mammalian Gene Collection (MGC).</title>
        <authorList>
            <consortium name="The MGC Project Team"/>
        </authorList>
    </citation>
    <scope>NUCLEOTIDE SEQUENCE [LARGE SCALE MRNA] (ISOFORMS 2 AND 3)</scope>
    <source>
        <strain>Czech II</strain>
        <tissue>Eye</tissue>
        <tissue>Mammary gland</tissue>
    </source>
</reference>
<reference key="3">
    <citation type="journal article" date="2009" name="Nature">
        <title>NAADP mobilizes calcium from acidic organelles through two-pore channels.</title>
        <authorList>
            <person name="Calcraft P.J."/>
            <person name="Ruas M."/>
            <person name="Pan Z."/>
            <person name="Cheng X."/>
            <person name="Arredouani A."/>
            <person name="Hao X."/>
            <person name="Tang J."/>
            <person name="Rietdorf K."/>
            <person name="Teboul L."/>
            <person name="Chuang K.T."/>
            <person name="Lin P."/>
            <person name="Xiao R."/>
            <person name="Wang C."/>
            <person name="Zhu Y."/>
            <person name="Lin Y."/>
            <person name="Wyatt C.N."/>
            <person name="Parrington J."/>
            <person name="Ma J."/>
            <person name="Evans A.M."/>
            <person name="Galione A."/>
            <person name="Zhu M.X."/>
        </authorList>
    </citation>
    <scope>FUNCTION</scope>
    <scope>DISRUPTION PHENOTYPE</scope>
</reference>
<reference key="4">
    <citation type="journal article" date="2009" name="Pflugers Arch.">
        <title>The two-pore channel TPCN2 mediates NAADP-dependent Ca(2+)-release from lysosomal stores.</title>
        <authorList>
            <person name="Zong X."/>
            <person name="Schieder M."/>
            <person name="Cuny H."/>
            <person name="Fenske S."/>
            <person name="Gruner C."/>
            <person name="Roetzer K."/>
            <person name="Griesbeck O."/>
            <person name="Harz H."/>
            <person name="Biel M."/>
            <person name="Wahl-Schott C."/>
        </authorList>
    </citation>
    <scope>GLYCOSYLATION AT ASN-594 AND ASN-601</scope>
    <scope>SUBCELLULAR LOCATION</scope>
    <scope>SUBUNIT</scope>
    <scope>TISSUE SPECIFICITY</scope>
    <scope>TOPOLOGY</scope>
    <scope>MUTAGENESIS OF ASN-594 AND ASN-601</scope>
</reference>
<reference key="5">
    <citation type="journal article" date="2010" name="J. Biol. Chem.">
        <title>Characterizatgmion of two-pore channel 2 (TPCN2)-mediated Ca2+ currents in isolated lysosomes.</title>
        <authorList>
            <person name="Schieder M."/>
            <person name="Roetzer K."/>
            <person name="Brueggemann A."/>
            <person name="Biel M."/>
            <person name="Wahl-Schott C.A."/>
        </authorList>
    </citation>
    <scope>FUNCTION</scope>
    <scope>MUTAGENESIS OF ASN-257 AND GLU-643</scope>
    <scope>SUBCELLULAR LOCATION</scope>
</reference>
<reference key="6">
    <citation type="journal article" date="2010" name="J. Biol. Chem.">
        <title>TPC2 proteins mediate nicotinic acid adenine dinucleotide phosphate (NAADP)- and agonist-evoked contractions of smooth muscle.</title>
        <authorList>
            <person name="Tugba Durlu-Kandilci N."/>
            <person name="Ruas M."/>
            <person name="Chuang K.T."/>
            <person name="Brading A."/>
            <person name="Parrington J."/>
            <person name="Galione A."/>
        </authorList>
    </citation>
    <scope>FUNCTION</scope>
</reference>
<reference key="7">
    <citation type="journal article" date="2012" name="Cell">
        <title>TPC proteins are phosphoinositide- activated sodium-selective ion channels in endosomes and lysosomes.</title>
        <authorList>
            <person name="Wang X."/>
            <person name="Zhang X."/>
            <person name="Dong X.P."/>
            <person name="Samie M."/>
            <person name="Li X."/>
            <person name="Cheng X."/>
            <person name="Goschka A."/>
            <person name="Shen D."/>
            <person name="Zhou Y."/>
            <person name="Harlow J."/>
            <person name="Zhu M.X."/>
            <person name="Clapham D.E."/>
            <person name="Ren D."/>
            <person name="Xu H."/>
        </authorList>
    </citation>
    <scope>FUNCTION</scope>
</reference>
<reference key="8">
    <citation type="journal article" date="2013" name="Cell">
        <title>mTOR regulates lysosomal ATP-sensitive two-pore Na(+) channels to adapt to metabolic state.</title>
        <authorList>
            <person name="Cang C."/>
            <person name="Zhou Y."/>
            <person name="Navarro B."/>
            <person name="Seo Y.J."/>
            <person name="Aranda K."/>
            <person name="Shi L."/>
            <person name="Battaglia-Hsu S."/>
            <person name="Nissim I."/>
            <person name="Clapham D.E."/>
            <person name="Ren D."/>
        </authorList>
    </citation>
    <scope>FUNCTION</scope>
    <scope>DISRUPTION PHENOTYPE</scope>
</reference>
<reference key="9">
    <citation type="journal article" date="2014" name="Nat. Commun.">
        <title>High susceptibility to fatty liver disease in two-pore channel 2-deficient mice.</title>
        <authorList>
            <person name="Grimm C."/>
            <person name="Holdt L.M."/>
            <person name="Chen C.C."/>
            <person name="Hassan S."/>
            <person name="Mueller C."/>
            <person name="Joers S."/>
            <person name="Cuny H."/>
            <person name="Kissing S."/>
            <person name="Schroeder B."/>
            <person name="Butz E."/>
            <person name="Northoff B."/>
            <person name="Castonguay J."/>
            <person name="Luber C.A."/>
            <person name="Moser M."/>
            <person name="Spahn S."/>
            <person name="Luellmann-Rauch R."/>
            <person name="Fendel C."/>
            <person name="Klugbauer N."/>
            <person name="Griesbeck O."/>
            <person name="Haas A."/>
            <person name="Mann M."/>
            <person name="Bracher F."/>
            <person name="Teupser D."/>
            <person name="Saftig P."/>
            <person name="Biel M."/>
            <person name="Wahl-Schott C."/>
        </authorList>
    </citation>
    <scope>FUNCTION</scope>
    <scope>DISRUPTION PHENOTYPE</scope>
    <scope>SUBCELLULAR LOCATION</scope>
    <scope>CATALYTIC ACTIVITY</scope>
</reference>
<reference key="10">
    <citation type="journal article" date="2015" name="Science">
        <title>Ebola virus. Two-pore channels control Ebola virus host cell entry and are drug targets for disease treatment.</title>
        <authorList>
            <person name="Sakurai Y."/>
            <person name="Kolokoltsov A.A."/>
            <person name="Chen C.C."/>
            <person name="Tidwell M.W."/>
            <person name="Bauta W.E."/>
            <person name="Klugbauer N."/>
            <person name="Grimm C."/>
            <person name="Wahl-Schott C."/>
            <person name="Biel M."/>
            <person name="Davey R.A."/>
        </authorList>
    </citation>
    <scope>FUNCTION (MICROBIAL INFECTION)</scope>
</reference>
<reference key="11">
    <citation type="journal article" date="2016" name="Sci. Rep.">
        <title>A melanosomal two-pore sodium channel regulates pigmentation.</title>
        <authorList>
            <person name="Bellono N.W."/>
            <person name="Escobar I.E."/>
            <person name="Oancea E."/>
        </authorList>
    </citation>
    <scope>FUNCTION</scope>
    <scope>CATALYTIC ACTIVITY</scope>
    <scope>SUBCELLULAR LOCATION</scope>
    <scope>TISSUE SPECIFICITY</scope>
</reference>
<reference key="12">
    <citation type="journal article" date="2020" name="Elife">
        <title>Agonist-mediated switching of ion selectivity in TPC2 differentially promotes lysosomal function.</title>
        <authorList>
            <person name="Gerndt S."/>
            <person name="Chen C.C."/>
            <person name="Chao Y.K."/>
            <person name="Yuan Y."/>
            <person name="Burgstaller S."/>
            <person name="Scotto Rosato A."/>
            <person name="Krogsaeter E."/>
            <person name="Urban N."/>
            <person name="Jacob K."/>
            <person name="Nguyen O.N.P."/>
            <person name="Miller M.T."/>
            <person name="Keller M."/>
            <person name="Vollmar A.M."/>
            <person name="Gudermann T."/>
            <person name="Zierler S."/>
            <person name="Schredelseker J."/>
            <person name="Schaefer M."/>
            <person name="Biel M."/>
            <person name="Malli R."/>
            <person name="Wahl-Schott C."/>
            <person name="Bracher F."/>
            <person name="Patel S."/>
            <person name="Grimm C."/>
        </authorList>
    </citation>
    <scope>FUNCTION</scope>
    <scope>SUBCELLULAR LOCATION</scope>
</reference>
<name>TPC2_MOUSE</name>
<evidence type="ECO:0000250" key="1"/>
<evidence type="ECO:0000250" key="2">
    <source>
        <dbReference type="UniProtKB" id="Q8NHX9"/>
    </source>
</evidence>
<evidence type="ECO:0000255" key="3"/>
<evidence type="ECO:0000269" key="4">
    <source>
    </source>
</evidence>
<evidence type="ECO:0000269" key="5">
    <source>
    </source>
</evidence>
<evidence type="ECO:0000269" key="6">
    <source>
    </source>
</evidence>
<evidence type="ECO:0000269" key="7">
    <source>
    </source>
</evidence>
<evidence type="ECO:0000269" key="8">
    <source>
    </source>
</evidence>
<evidence type="ECO:0000269" key="9">
    <source>
    </source>
</evidence>
<evidence type="ECO:0000269" key="10">
    <source>
    </source>
</evidence>
<evidence type="ECO:0000269" key="11">
    <source>
    </source>
</evidence>
<evidence type="ECO:0000269" key="12">
    <source>
    </source>
</evidence>
<evidence type="ECO:0000269" key="13">
    <source>
    </source>
</evidence>
<evidence type="ECO:0000303" key="14">
    <source>
    </source>
</evidence>
<evidence type="ECO:0000305" key="15"/>
<evidence type="ECO:0000305" key="16">
    <source>
    </source>
</evidence>
<evidence type="ECO:0000305" key="17">
    <source>
    </source>
</evidence>
<evidence type="ECO:0000312" key="18">
    <source>
        <dbReference type="MGI" id="MGI:2385297"/>
    </source>
</evidence>
<gene>
    <name evidence="18" type="primary">Tpcn2</name>
    <name type="synonym">Tpc2</name>
</gene>
<protein>
    <recommendedName>
        <fullName>Two pore channel protein 2</fullName>
    </recommendedName>
    <alternativeName>
        <fullName evidence="15">Two pore calcium channel protein 2</fullName>
    </alternativeName>
    <alternativeName>
        <fullName>Voltage-dependent calcium channel protein TPC2</fullName>
    </alternativeName>
</protein>
<sequence>MAAEEQPLLGRDRGSGQVHSGAAADQELCIDQAVVFIEDAIKYRSIYHRMDAGSLWLYRWYYSNVCQRVLGFIIFLILILAFVEVPSSFTKTADVRYRSQPWQPPCGLTETIEAFCLLAFLVDLSVKGYLVGQAQLQQNLWLLAYFMVLVVSVVDWIVSLSLACEEPLRMRRLLRPFFLLQNSSMMKKTLKCIRWSLPEMASVGLLLAIHLCLFTIIGMLLFTIGEKDEAQDQERLAYFRNLPEALTSLLVLLTTSNNPDVMIPAYTQNRAFALFFIVFTLIGSLFLMNLLTAIIYNQFRGYLMKSLQTSLFRRRLGARAAYEVLASRAGPAGTTPELVGVNPETFLPVLQKTQLNKTHKQAIMQKVQSYEGRPMLADEFQKLFDEVDKGLAKERPLKPQYQSPFLQTAQFIFSHHYFDYLGNLVALGNLLSICVFLVLDSDLLPGERDDFVLGILDYIFILYYLLELLFKVFALGLPGYLSYHSNVFDGLLTIILLVSEICTLAVYRLPHSGWKPEQYGPLSLWDMTRLMNTLIVFRFLRIIPNIKPMAEVANTILGLIPNLRAFGGILVVAYYVFAMIGINLFRGVIVPPGNSSLVPDNNSAVCGSFEQLGYWPNNFDDFAAALITLWNVMVVNNWQVILEAYKRYAGPWSMVYFVLWWLVSSVIWINLFLALLLENFLHRWDPQGHKQLLVGTKQMSVELMFRDILEEPKEEELMEKLHKHPHLHLCR</sequence>
<keyword id="KW-0025">Alternative splicing</keyword>
<keyword id="KW-0106">Calcium</keyword>
<keyword id="KW-0107">Calcium channel</keyword>
<keyword id="KW-0109">Calcium transport</keyword>
<keyword id="KW-0967">Endosome</keyword>
<keyword id="KW-0325">Glycoprotein</keyword>
<keyword id="KW-0407">Ion channel</keyword>
<keyword id="KW-0406">Ion transport</keyword>
<keyword id="KW-0458">Lysosome</keyword>
<keyword id="KW-0472">Membrane</keyword>
<keyword id="KW-1185">Reference proteome</keyword>
<keyword id="KW-0677">Repeat</keyword>
<keyword id="KW-0812">Transmembrane</keyword>
<keyword id="KW-1133">Transmembrane helix</keyword>
<keyword id="KW-0813">Transport</keyword>
<keyword id="KW-0851">Voltage-gated channel</keyword>
<feature type="chain" id="PRO_0000276857" description="Two pore channel protein 2">
    <location>
        <begin position="1"/>
        <end position="731"/>
    </location>
</feature>
<feature type="topological domain" description="Cytoplasmic" evidence="3">
    <location>
        <begin position="1"/>
        <end position="68"/>
    </location>
</feature>
<feature type="transmembrane region" description="Helical; Name=S1 of repeat I" evidence="3">
    <location>
        <begin position="69"/>
        <end position="89"/>
    </location>
</feature>
<feature type="topological domain" description="Extracellular" evidence="3">
    <location>
        <begin position="90"/>
        <end position="111"/>
    </location>
</feature>
<feature type="transmembrane region" description="Helical; Name=S2 of repeat I" evidence="3">
    <location>
        <begin position="112"/>
        <end position="132"/>
    </location>
</feature>
<feature type="topological domain" description="Cytoplasmic" evidence="3">
    <location>
        <begin position="133"/>
        <end position="139"/>
    </location>
</feature>
<feature type="transmembrane region" description="Helical; Name=S3 of repeat I" evidence="3">
    <location>
        <begin position="140"/>
        <end position="160"/>
    </location>
</feature>
<feature type="topological domain" description="Extracellular" evidence="3">
    <location>
        <begin position="161"/>
        <end position="167"/>
    </location>
</feature>
<feature type="transmembrane region" description="Helical; Name=S4 of repeat I" evidence="3">
    <location>
        <begin position="168"/>
        <end position="188"/>
    </location>
</feature>
<feature type="topological domain" description="Cytoplasmic" evidence="3">
    <location>
        <begin position="189"/>
        <end position="203"/>
    </location>
</feature>
<feature type="transmembrane region" description="Helical; Name=S5 of repeat I" evidence="3">
    <location>
        <begin position="204"/>
        <end position="224"/>
    </location>
</feature>
<feature type="topological domain" description="Extracellular" evidence="3">
    <location>
        <begin position="225"/>
        <end position="238"/>
    </location>
</feature>
<feature type="intramembrane region" description="Helical; Pore-forming" evidence="3">
    <location>
        <begin position="239"/>
        <end position="263"/>
    </location>
</feature>
<feature type="topological domain" description="Extracellular" evidence="3">
    <location>
        <begin position="264"/>
        <end position="270"/>
    </location>
</feature>
<feature type="transmembrane region" description="Helical; Name=S6 of repeat I" evidence="3">
    <location>
        <begin position="271"/>
        <end position="291"/>
    </location>
</feature>
<feature type="topological domain" description="Cytoplasmic" evidence="3">
    <location>
        <begin position="292"/>
        <end position="417"/>
    </location>
</feature>
<feature type="transmembrane region" description="Helical; Name=S1 of repeat II" evidence="3">
    <location>
        <begin position="418"/>
        <end position="438"/>
    </location>
</feature>
<feature type="topological domain" description="Extracellular" evidence="3">
    <location>
        <begin position="439"/>
        <end position="449"/>
    </location>
</feature>
<feature type="transmembrane region" description="Helical; Name=S2 of repeat II" evidence="3">
    <location>
        <begin position="450"/>
        <end position="470"/>
    </location>
</feature>
<feature type="topological domain" description="Cytoplasmic" evidence="3">
    <location>
        <begin position="471"/>
        <end position="486"/>
    </location>
</feature>
<feature type="transmembrane region" description="Helical; Name=S3 of repeat II" evidence="3">
    <location>
        <begin position="487"/>
        <end position="507"/>
    </location>
</feature>
<feature type="topological domain" description="Extracellular" evidence="3">
    <location>
        <begin position="508"/>
        <end position="524"/>
    </location>
</feature>
<feature type="transmembrane region" description="Helical; Name=S4 of repeat II" evidence="3">
    <location>
        <begin position="525"/>
        <end position="542"/>
    </location>
</feature>
<feature type="topological domain" description="Cytoplasmic" evidence="3">
    <location>
        <begin position="543"/>
        <end position="564"/>
    </location>
</feature>
<feature type="transmembrane region" description="Helical; Name=S5 of repeat II" evidence="3">
    <location>
        <begin position="565"/>
        <end position="585"/>
    </location>
</feature>
<feature type="topological domain" description="Extracellular" evidence="3">
    <location>
        <begin position="586"/>
        <end position="618"/>
    </location>
</feature>
<feature type="intramembrane region" description="Helical; Pore-forming" evidence="3">
    <location>
        <begin position="619"/>
        <end position="641"/>
    </location>
</feature>
<feature type="topological domain" description="Extracellular" evidence="3">
    <location>
        <begin position="642"/>
        <end position="656"/>
    </location>
</feature>
<feature type="transmembrane region" description="Helical; Name=S6 of repeat II" evidence="3">
    <location>
        <begin position="657"/>
        <end position="677"/>
    </location>
</feature>
<feature type="topological domain" description="Cytoplasmic" evidence="3">
    <location>
        <begin position="678"/>
        <end position="731"/>
    </location>
</feature>
<feature type="region of interest" description="Interaction with phosphatidylinositol 3,5-bisphosphate" evidence="2">
    <location>
        <begin position="187"/>
        <end position="191"/>
    </location>
</feature>
<feature type="glycosylation site" description="N-linked (GlcNAc...) asparagine" evidence="5">
    <location>
        <position position="594"/>
    </location>
</feature>
<feature type="glycosylation site" description="N-linked (GlcNAc...) asparagine" evidence="5">
    <location>
        <position position="601"/>
    </location>
</feature>
<feature type="splice variant" id="VSP_023008" description="In isoform 3." evidence="14">
    <location>
        <begin position="1"/>
        <end position="526"/>
    </location>
</feature>
<feature type="splice variant" id="VSP_023009" description="In isoform 2." evidence="14">
    <location>
        <begin position="1"/>
        <end position="453"/>
    </location>
</feature>
<feature type="splice variant" id="VSP_023010" description="In isoform 2." evidence="14">
    <original>GILDYIFILYYLLELLFKVFALGLPGYLSYHSNVFDGLLTIILLVSEICTLAVYRLPHSGW</original>
    <variation>MAAWDLGVSYGWAQPPLLLGAFSAWCPYSDYCCLFTPAASSPHPSAPPDFLTCLLCLPR</variation>
    <location>
        <begin position="454"/>
        <end position="514"/>
    </location>
</feature>
<feature type="mutagenesis site" description="Complete loss of selectivity for calcium over monocovalent cations." evidence="6">
    <original>N</original>
    <variation>A</variation>
    <location>
        <position position="257"/>
    </location>
</feature>
<feature type="mutagenesis site" description="Loss of N-glycosylation; when associated with N-601." evidence="5">
    <original>N</original>
    <variation>A</variation>
    <location>
        <position position="594"/>
    </location>
</feature>
<feature type="mutagenesis site" description="Loss of N-glycosylation; when associated with N-594." evidence="5">
    <original>N</original>
    <variation>A</variation>
    <location>
        <position position="601"/>
    </location>
</feature>
<feature type="mutagenesis site" description="Partial loss of selectivity for calcium over monocovalent cations." evidence="6">
    <original>E</original>
    <variation>A</variation>
    <location>
        <position position="643"/>
    </location>
</feature>
<feature type="sequence conflict" description="In Ref. 1; BAC41072." evidence="15" ref="1">
    <original>K</original>
    <variation>E</variation>
    <location>
        <position position="127"/>
    </location>
</feature>
<feature type="sequence conflict" description="In Ref. 1; BAC41072." evidence="15" ref="1">
    <original>I</original>
    <variation>V</variation>
    <location>
        <position position="224"/>
    </location>
</feature>
<feature type="sequence conflict" description="In Ref. 1; BAC41072." evidence="15" ref="1">
    <original>F</original>
    <variation>L</variation>
    <location>
        <position position="272"/>
    </location>
</feature>
<accession>Q8BWC0</accession>
<accession>Q6NSV0</accession>
<accession>Q8BTJ7</accession>
<accession>Q8R396</accession>
<dbReference type="EMBL" id="AK052930">
    <property type="protein sequence ID" value="BAC35207.1"/>
    <property type="molecule type" value="mRNA"/>
</dbReference>
<dbReference type="EMBL" id="AK090059">
    <property type="protein sequence ID" value="BAC41072.1"/>
    <property type="status" value="ALT_FRAME"/>
    <property type="molecule type" value="mRNA"/>
</dbReference>
<dbReference type="EMBL" id="BC025890">
    <property type="protein sequence ID" value="AAH25890.1"/>
    <property type="molecule type" value="mRNA"/>
</dbReference>
<dbReference type="EMBL" id="BC069857">
    <property type="protein sequence ID" value="AAH69857.1"/>
    <property type="molecule type" value="mRNA"/>
</dbReference>
<dbReference type="CCDS" id="CCDS40203.1">
    <molecule id="Q8BWC0-1"/>
</dbReference>
<dbReference type="RefSeq" id="NP_666318.2">
    <molecule id="Q8BWC0-1"/>
    <property type="nucleotide sequence ID" value="NM_146206.5"/>
</dbReference>
<dbReference type="SMR" id="Q8BWC0"/>
<dbReference type="BioGRID" id="231481">
    <property type="interactions" value="1"/>
</dbReference>
<dbReference type="FunCoup" id="Q8BWC0">
    <property type="interactions" value="359"/>
</dbReference>
<dbReference type="STRING" id="10090.ENSMUSP00000061308"/>
<dbReference type="GlyCosmos" id="Q8BWC0">
    <property type="glycosylation" value="2 sites, No reported glycans"/>
</dbReference>
<dbReference type="GlyGen" id="Q8BWC0">
    <property type="glycosylation" value="3 sites, 1 O-linked glycan (1 site)"/>
</dbReference>
<dbReference type="iPTMnet" id="Q8BWC0"/>
<dbReference type="PhosphoSitePlus" id="Q8BWC0"/>
<dbReference type="PaxDb" id="10090-ENSMUSP00000061308"/>
<dbReference type="ProteomicsDB" id="258825">
    <molecule id="Q8BWC0-1"/>
</dbReference>
<dbReference type="ProteomicsDB" id="258826">
    <molecule id="Q8BWC0-2"/>
</dbReference>
<dbReference type="ProteomicsDB" id="258827">
    <molecule id="Q8BWC0-3"/>
</dbReference>
<dbReference type="Pumba" id="Q8BWC0"/>
<dbReference type="DNASU" id="233979"/>
<dbReference type="Ensembl" id="ENSMUST00000058022.6">
    <molecule id="Q8BWC0-1"/>
    <property type="protein sequence ID" value="ENSMUSP00000061308.5"/>
    <property type="gene ID" value="ENSMUSG00000048677.10"/>
</dbReference>
<dbReference type="GeneID" id="233979"/>
<dbReference type="KEGG" id="mmu:233979"/>
<dbReference type="UCSC" id="uc009kqw.1">
    <molecule id="Q8BWC0-2"/>
    <property type="organism name" value="mouse"/>
</dbReference>
<dbReference type="UCSC" id="uc009kqx.1">
    <molecule id="Q8BWC0-1"/>
    <property type="organism name" value="mouse"/>
</dbReference>
<dbReference type="AGR" id="MGI:2385297"/>
<dbReference type="CTD" id="219931"/>
<dbReference type="MGI" id="MGI:2385297">
    <property type="gene designation" value="Tpcn2"/>
</dbReference>
<dbReference type="VEuPathDB" id="HostDB:ENSMUSG00000048677"/>
<dbReference type="eggNOG" id="KOG2301">
    <property type="taxonomic scope" value="Eukaryota"/>
</dbReference>
<dbReference type="GeneTree" id="ENSGT00940000159763"/>
<dbReference type="HOGENOM" id="CLU_019500_1_0_1"/>
<dbReference type="InParanoid" id="Q8BWC0"/>
<dbReference type="OMA" id="FTESIEM"/>
<dbReference type="OrthoDB" id="416585at2759"/>
<dbReference type="PhylomeDB" id="Q8BWC0"/>
<dbReference type="TreeFam" id="TF328550"/>
<dbReference type="Reactome" id="R-MMU-2672351">
    <property type="pathway name" value="Stimuli-sensing channels"/>
</dbReference>
<dbReference type="BioGRID-ORCS" id="233979">
    <property type="hits" value="2 hits in 78 CRISPR screens"/>
</dbReference>
<dbReference type="PRO" id="PR:Q8BWC0"/>
<dbReference type="Proteomes" id="UP000000589">
    <property type="component" value="Chromosome 7"/>
</dbReference>
<dbReference type="RNAct" id="Q8BWC0">
    <property type="molecule type" value="protein"/>
</dbReference>
<dbReference type="Bgee" id="ENSMUSG00000048677">
    <property type="expression patterns" value="Expressed in granulocyte and 104 other cell types or tissues"/>
</dbReference>
<dbReference type="ExpressionAtlas" id="Q8BWC0">
    <property type="expression patterns" value="baseline and differential"/>
</dbReference>
<dbReference type="GO" id="GO:0005829">
    <property type="term" value="C:cytosol"/>
    <property type="evidence" value="ECO:0007669"/>
    <property type="project" value="GOC"/>
</dbReference>
<dbReference type="GO" id="GO:0036020">
    <property type="term" value="C:endolysosome membrane"/>
    <property type="evidence" value="ECO:0000250"/>
    <property type="project" value="UniProtKB"/>
</dbReference>
<dbReference type="GO" id="GO:0031902">
    <property type="term" value="C:late endosome membrane"/>
    <property type="evidence" value="ECO:0007669"/>
    <property type="project" value="UniProtKB-SubCell"/>
</dbReference>
<dbReference type="GO" id="GO:0005765">
    <property type="term" value="C:lysosomal membrane"/>
    <property type="evidence" value="ECO:0000314"/>
    <property type="project" value="UniProtKB"/>
</dbReference>
<dbReference type="GO" id="GO:0005764">
    <property type="term" value="C:lysosome"/>
    <property type="evidence" value="ECO:0000314"/>
    <property type="project" value="UniProtKB"/>
</dbReference>
<dbReference type="GO" id="GO:0033162">
    <property type="term" value="C:melanosome membrane"/>
    <property type="evidence" value="ECO:0000314"/>
    <property type="project" value="UniProtKB"/>
</dbReference>
<dbReference type="GO" id="GO:0034702">
    <property type="term" value="C:monoatomic ion channel complex"/>
    <property type="evidence" value="ECO:0007669"/>
    <property type="project" value="UniProtKB-KW"/>
</dbReference>
<dbReference type="GO" id="GO:0042802">
    <property type="term" value="F:identical protein binding"/>
    <property type="evidence" value="ECO:0000250"/>
    <property type="project" value="UniProtKB"/>
</dbReference>
<dbReference type="GO" id="GO:0097682">
    <property type="term" value="F:intracellularly phosphatidylinositol-3,5-bisphosphate-gated monatomic cation channel activity"/>
    <property type="evidence" value="ECO:0000250"/>
    <property type="project" value="UniProtKB"/>
</dbReference>
<dbReference type="GO" id="GO:0015280">
    <property type="term" value="F:ligand-gated sodium channel activity"/>
    <property type="evidence" value="ECO:0000314"/>
    <property type="project" value="UniProtKB"/>
</dbReference>
<dbReference type="GO" id="GO:0072345">
    <property type="term" value="F:NAADP-sensitive calcium-release channel activity"/>
    <property type="evidence" value="ECO:0000314"/>
    <property type="project" value="UniProtKB"/>
</dbReference>
<dbReference type="GO" id="GO:0080025">
    <property type="term" value="F:phosphatidylinositol-3,5-bisphosphate binding"/>
    <property type="evidence" value="ECO:0000250"/>
    <property type="project" value="UniProtKB"/>
</dbReference>
<dbReference type="GO" id="GO:0019901">
    <property type="term" value="F:protein kinase binding"/>
    <property type="evidence" value="ECO:0007669"/>
    <property type="project" value="Ensembl"/>
</dbReference>
<dbReference type="GO" id="GO:0005245">
    <property type="term" value="F:voltage-gated calcium channel activity"/>
    <property type="evidence" value="ECO:0000315"/>
    <property type="project" value="UniProtKB"/>
</dbReference>
<dbReference type="GO" id="GO:0019722">
    <property type="term" value="P:calcium-mediated signaling"/>
    <property type="evidence" value="ECO:0000315"/>
    <property type="project" value="UniProtKB"/>
</dbReference>
<dbReference type="GO" id="GO:0075509">
    <property type="term" value="P:endocytosis involved in viral entry into host cell"/>
    <property type="evidence" value="ECO:0000315"/>
    <property type="project" value="UniProtKB"/>
</dbReference>
<dbReference type="GO" id="GO:0090117">
    <property type="term" value="P:endosome to lysosome transport of low-density lipoprotein particle"/>
    <property type="evidence" value="ECO:0000315"/>
    <property type="project" value="UniProtKB"/>
</dbReference>
<dbReference type="GO" id="GO:0006874">
    <property type="term" value="P:intracellular calcium ion homeostasis"/>
    <property type="evidence" value="ECO:0007669"/>
    <property type="project" value="Ensembl"/>
</dbReference>
<dbReference type="GO" id="GO:0051452">
    <property type="term" value="P:intracellular pH reduction"/>
    <property type="evidence" value="ECO:0000314"/>
    <property type="project" value="UniProtKB"/>
</dbReference>
<dbReference type="GO" id="GO:0007040">
    <property type="term" value="P:lysosome organization"/>
    <property type="evidence" value="ECO:0007669"/>
    <property type="project" value="Ensembl"/>
</dbReference>
<dbReference type="GO" id="GO:0048086">
    <property type="term" value="P:negative regulation of developmental pigmentation"/>
    <property type="evidence" value="ECO:0000314"/>
    <property type="project" value="UniProtKB"/>
</dbReference>
<dbReference type="GO" id="GO:0019065">
    <property type="term" value="P:receptor-mediated endocytosis of virus by host cell"/>
    <property type="evidence" value="ECO:0007669"/>
    <property type="project" value="Ensembl"/>
</dbReference>
<dbReference type="GO" id="GO:0010506">
    <property type="term" value="P:regulation of autophagy"/>
    <property type="evidence" value="ECO:0007669"/>
    <property type="project" value="Ensembl"/>
</dbReference>
<dbReference type="GO" id="GO:0017157">
    <property type="term" value="P:regulation of exocytosis"/>
    <property type="evidence" value="ECO:0000315"/>
    <property type="project" value="UniProtKB"/>
</dbReference>
<dbReference type="GO" id="GO:0051209">
    <property type="term" value="P:release of sequestered calcium ion into cytosol"/>
    <property type="evidence" value="ECO:0000315"/>
    <property type="project" value="UniProtKB"/>
</dbReference>
<dbReference type="GO" id="GO:0033280">
    <property type="term" value="P:response to vitamin D"/>
    <property type="evidence" value="ECO:0007669"/>
    <property type="project" value="Ensembl"/>
</dbReference>
<dbReference type="GO" id="GO:0006939">
    <property type="term" value="P:smooth muscle contraction"/>
    <property type="evidence" value="ECO:0000315"/>
    <property type="project" value="UniProtKB"/>
</dbReference>
<dbReference type="GO" id="GO:0035725">
    <property type="term" value="P:sodium ion transmembrane transport"/>
    <property type="evidence" value="ECO:0000250"/>
    <property type="project" value="UniProtKB"/>
</dbReference>
<dbReference type="FunFam" id="1.10.287.70:FF:000104">
    <property type="entry name" value="Two pore calcium channel protein 2"/>
    <property type="match status" value="1"/>
</dbReference>
<dbReference type="FunFam" id="1.20.120.350:FF:000073">
    <property type="entry name" value="Two pore segment channel 2"/>
    <property type="match status" value="1"/>
</dbReference>
<dbReference type="Gene3D" id="1.10.287.70">
    <property type="match status" value="2"/>
</dbReference>
<dbReference type="Gene3D" id="1.20.120.350">
    <property type="entry name" value="Voltage-gated potassium channels. Chain C"/>
    <property type="match status" value="2"/>
</dbReference>
<dbReference type="InterPro" id="IPR005821">
    <property type="entry name" value="Ion_trans_dom"/>
</dbReference>
<dbReference type="InterPro" id="IPR028798">
    <property type="entry name" value="TPC2"/>
</dbReference>
<dbReference type="InterPro" id="IPR027359">
    <property type="entry name" value="Volt_channel_dom_sf"/>
</dbReference>
<dbReference type="PANTHER" id="PTHR46768">
    <property type="entry name" value="TWO PORE CALCIUM CHANNEL PROTEIN 2"/>
    <property type="match status" value="1"/>
</dbReference>
<dbReference type="PANTHER" id="PTHR46768:SF1">
    <property type="entry name" value="TWO PORE CHANNEL PROTEIN 2"/>
    <property type="match status" value="1"/>
</dbReference>
<dbReference type="Pfam" id="PF00520">
    <property type="entry name" value="Ion_trans"/>
    <property type="match status" value="2"/>
</dbReference>
<dbReference type="SUPFAM" id="SSF81324">
    <property type="entry name" value="Voltage-gated potassium channels"/>
    <property type="match status" value="2"/>
</dbReference>
<organism>
    <name type="scientific">Mus musculus</name>
    <name type="common">Mouse</name>
    <dbReference type="NCBI Taxonomy" id="10090"/>
    <lineage>
        <taxon>Eukaryota</taxon>
        <taxon>Metazoa</taxon>
        <taxon>Chordata</taxon>
        <taxon>Craniata</taxon>
        <taxon>Vertebrata</taxon>
        <taxon>Euteleostomi</taxon>
        <taxon>Mammalia</taxon>
        <taxon>Eutheria</taxon>
        <taxon>Euarchontoglires</taxon>
        <taxon>Glires</taxon>
        <taxon>Rodentia</taxon>
        <taxon>Myomorpha</taxon>
        <taxon>Muroidea</taxon>
        <taxon>Muridae</taxon>
        <taxon>Murinae</taxon>
        <taxon>Mus</taxon>
        <taxon>Mus</taxon>
    </lineage>
</organism>
<proteinExistence type="evidence at protein level"/>